<keyword id="KW-0489">Methyltransferase</keyword>
<keyword id="KW-1185">Reference proteome</keyword>
<keyword id="KW-0949">S-adenosyl-L-methionine</keyword>
<keyword id="KW-0808">Transferase</keyword>
<keyword id="KW-0819">tRNA processing</keyword>
<feature type="chain" id="PRO_0000226143" description="tRNA wybutosine-synthesizing protein 4">
    <location>
        <begin position="1"/>
        <end position="1213"/>
    </location>
</feature>
<feature type="domain" description="JmjC" evidence="2">
    <location>
        <begin position="1006"/>
        <end position="1166"/>
    </location>
</feature>
<feature type="region of interest" description="Disordered" evidence="3">
    <location>
        <begin position="1"/>
        <end position="76"/>
    </location>
</feature>
<feature type="region of interest" description="Disordered" evidence="3">
    <location>
        <begin position="215"/>
        <end position="272"/>
    </location>
</feature>
<feature type="region of interest" description="Disordered" evidence="3">
    <location>
        <begin position="879"/>
        <end position="900"/>
    </location>
</feature>
<feature type="compositionally biased region" description="Low complexity" evidence="3">
    <location>
        <begin position="1"/>
        <end position="13"/>
    </location>
</feature>
<feature type="compositionally biased region" description="Low complexity" evidence="3">
    <location>
        <begin position="39"/>
        <end position="52"/>
    </location>
</feature>
<feature type="compositionally biased region" description="Basic and acidic residues" evidence="3">
    <location>
        <begin position="53"/>
        <end position="67"/>
    </location>
</feature>
<feature type="compositionally biased region" description="Low complexity" evidence="3">
    <location>
        <begin position="215"/>
        <end position="248"/>
    </location>
</feature>
<feature type="binding site" evidence="1">
    <location>
        <position position="117"/>
    </location>
    <ligand>
        <name>S-adenosyl-L-methionine</name>
        <dbReference type="ChEBI" id="CHEBI:59789"/>
    </ligand>
</feature>
<feature type="binding site" evidence="1">
    <location>
        <position position="148"/>
    </location>
    <ligand>
        <name>S-adenosyl-L-methionine</name>
        <dbReference type="ChEBI" id="CHEBI:59789"/>
    </ligand>
</feature>
<feature type="binding site" evidence="1">
    <location>
        <position position="180"/>
    </location>
    <ligand>
        <name>S-adenosyl-L-methionine</name>
        <dbReference type="ChEBI" id="CHEBI:59789"/>
    </ligand>
</feature>
<feature type="binding site" evidence="1">
    <location>
        <begin position="289"/>
        <end position="290"/>
    </location>
    <ligand>
        <name>S-adenosyl-L-methionine</name>
        <dbReference type="ChEBI" id="CHEBI:59789"/>
    </ligand>
</feature>
<feature type="binding site" evidence="1">
    <location>
        <position position="318"/>
    </location>
    <ligand>
        <name>S-adenosyl-L-methionine</name>
        <dbReference type="ChEBI" id="CHEBI:59789"/>
    </ligand>
</feature>
<protein>
    <recommendedName>
        <fullName>tRNA wybutosine-synthesizing protein 4</fullName>
        <shortName>tRNA-yW synthesizing protein 4</shortName>
        <ecNumber>2.1.1.290</ecNumber>
        <ecNumber>2.3.1.231</ecNumber>
    </recommendedName>
    <alternativeName>
        <fullName>Leucine carboxyl methyltransferase 2</fullName>
    </alternativeName>
    <alternativeName>
        <fullName>tRNA(Phe) (7-(3-amino-3-(methoxycarbonyl)propyl)wyosine(37)-N)-methoxycarbonyltransferase</fullName>
    </alternativeName>
    <alternativeName>
        <fullName>tRNA(Phe) (7-(3-amino-3-carboxypropyl)wyosine(37)-O)-methyltransferase</fullName>
    </alternativeName>
</protein>
<gene>
    <name type="primary">lcm-2</name>
    <name type="synonym">ppm2</name>
    <name type="synonym">tyw4</name>
    <name type="ORF">B15I20.020</name>
    <name type="ORF">NCU05392</name>
</gene>
<accession>Q9P3K9</accession>
<accession>Q1K8S2</accession>
<accession>V5INB9</accession>
<evidence type="ECO:0000250" key="1"/>
<evidence type="ECO:0000255" key="2">
    <source>
        <dbReference type="PROSITE-ProRule" id="PRU00538"/>
    </source>
</evidence>
<evidence type="ECO:0000256" key="3">
    <source>
        <dbReference type="SAM" id="MobiDB-lite"/>
    </source>
</evidence>
<evidence type="ECO:0000305" key="4"/>
<sequence length="1213" mass="132709">METTEEVVAPATTQQPATEVGSAKPTTSTYSKKQKKPKATTTTTTTDGTTPTHNEHASAKDPRKAQDDQVMGTNNSSIVSKRSVEKLYYPNEPHFFRFFVKKFQRRAPLINRGYHFRLHVIDVLVRNFLQEQRTGDAKGKRKVVVNLGCGSDVLPWQCLARYPDACRSGEKDGAKFVDVDFPDLIERKKRTVLETPELLGPLTNVVVPEFAPVPSTPAATTTAAATTTTTTELKTTAATASSTSTEAPQKPKKSPKPKDKSKAARAPAPTTAPTGIVFTSDQYVQIGCDLRDLATLQDSLTRAVGGDLSSCTFLFVAEVSITYMETPGADAVIQWASSLGDSEFVLLEQLLPSGPTHPFASTMLSHFHKLNTPIKSVDVYPTVASQVERFRSRGWGSGDVRVWTLWEAWADAEDTFVNAAERRRLDEVEPFDEWEEFALFASHYCVVRARTVARDGQNKKKERGIPNGRELGLPVEKVKVRWDDVPGQRGQRRFAAGAVLTSSSPSSEKKEEVKLLNVMGLGTKSRLQNCDVYGRKKVGDADEADGTDEEKTAVPFTFREGGPSTRMCHSLTDFGTAQLLVGGRASPSTPLKDCWLLEKTNGSESEWAWKRTNDLPIPLYRHSVTRLGKTDMALLAGGRGVADIFPDWLLYEPKLGWIRCEIAGDVKPTSVYGATLACLRQESDSFSGVFTGGLSDDGLIADQLLAWNLDVSNSSRPVVTFVPLQVKSGDDGREEALSRLLLTRFGASCLPQSRTDFLVFGGVIKDHLLDMEDEILLCSLKGDGELTITRRLVPEAANAKSPSHPGPLLLVGTSPVVTPDDGSLMIVGGGATCFSMGTFWNKGISTLELALPAAVENEASPIPAYGWVHEKTVDIIPGEPRSLPLRNQAPNGAEGNANGSVSVRIQPIPRVRLENAEDFARIVREGRPVVLEGLNLGDCVSQWGNGDYVAKKVGTDRKVVIHESTTPAMDFTTKNFRYVTTEFGDFMRRVEKGDRLYLRALSTDKPTEKPAVLSDDFPSLATDFVLPPELALVGDRLFSSVLRVSGPVNMWLHYDVMANVYCQIGGSKRMILFPPSDVEHLGFAPGASSSSIDVFSTLFGESSDSRYLAQVTHPHEAVMTPGDVLFLPPLWLHTATPTSDSSIAVNVFFRDLEGGCYAAGKDVYGNRDLAAYEKGRTDLTRIANSFQKLPAEAREFYLLRLADELRRKAKGAQ</sequence>
<dbReference type="EC" id="2.1.1.290"/>
<dbReference type="EC" id="2.3.1.231"/>
<dbReference type="EMBL" id="AL389900">
    <property type="protein sequence ID" value="CAB97456.1"/>
    <property type="molecule type" value="Genomic_DNA"/>
</dbReference>
<dbReference type="EMBL" id="CM002237">
    <property type="protein sequence ID" value="ESA43542.1"/>
    <property type="molecule type" value="Genomic_DNA"/>
</dbReference>
<dbReference type="PIR" id="T51032">
    <property type="entry name" value="T51032"/>
</dbReference>
<dbReference type="RefSeq" id="XP_011393570.1">
    <property type="nucleotide sequence ID" value="XM_011395268.1"/>
</dbReference>
<dbReference type="SMR" id="Q9P3K9"/>
<dbReference type="FunCoup" id="Q9P3K9">
    <property type="interactions" value="99"/>
</dbReference>
<dbReference type="STRING" id="367110.Q9P3K9"/>
<dbReference type="PaxDb" id="5141-EFNCRP00000006531"/>
<dbReference type="EnsemblFungi" id="ESA43542">
    <property type="protein sequence ID" value="ESA43542"/>
    <property type="gene ID" value="NCU05392"/>
</dbReference>
<dbReference type="GeneID" id="3879634"/>
<dbReference type="KEGG" id="ncr:NCU05392"/>
<dbReference type="VEuPathDB" id="FungiDB:NCU05392"/>
<dbReference type="HOGENOM" id="CLU_002761_1_0_1"/>
<dbReference type="InParanoid" id="Q9P3K9"/>
<dbReference type="OrthoDB" id="47172at2759"/>
<dbReference type="UniPathway" id="UPA00375"/>
<dbReference type="Proteomes" id="UP000001805">
    <property type="component" value="Chromosome 6, Linkage Group II"/>
</dbReference>
<dbReference type="GO" id="GO:0008175">
    <property type="term" value="F:tRNA methyltransferase activity"/>
    <property type="evidence" value="ECO:0000318"/>
    <property type="project" value="GO_Central"/>
</dbReference>
<dbReference type="GO" id="GO:0030488">
    <property type="term" value="P:tRNA methylation"/>
    <property type="evidence" value="ECO:0000318"/>
    <property type="project" value="GO_Central"/>
</dbReference>
<dbReference type="GO" id="GO:0031591">
    <property type="term" value="P:wybutosine biosynthetic process"/>
    <property type="evidence" value="ECO:0000318"/>
    <property type="project" value="GO_Central"/>
</dbReference>
<dbReference type="FunFam" id="2.60.120.650:FF:000043">
    <property type="entry name" value="tRNA wybutosine-synthesizing protein 4"/>
    <property type="match status" value="1"/>
</dbReference>
<dbReference type="Gene3D" id="6.10.140.1470">
    <property type="match status" value="1"/>
</dbReference>
<dbReference type="Gene3D" id="2.60.120.650">
    <property type="entry name" value="Cupin"/>
    <property type="match status" value="1"/>
</dbReference>
<dbReference type="Gene3D" id="2.120.10.80">
    <property type="entry name" value="Kelch-type beta propeller"/>
    <property type="match status" value="1"/>
</dbReference>
<dbReference type="Gene3D" id="3.40.50.150">
    <property type="entry name" value="Vaccinia Virus protein VP39"/>
    <property type="match status" value="1"/>
</dbReference>
<dbReference type="InterPro" id="IPR041667">
    <property type="entry name" value="Cupin_8"/>
</dbReference>
<dbReference type="InterPro" id="IPR011043">
    <property type="entry name" value="Gal_Oxase/kelch_b-propeller"/>
</dbReference>
<dbReference type="InterPro" id="IPR003347">
    <property type="entry name" value="JmjC_dom"/>
</dbReference>
<dbReference type="InterPro" id="IPR015915">
    <property type="entry name" value="Kelch-typ_b-propeller"/>
</dbReference>
<dbReference type="InterPro" id="IPR011498">
    <property type="entry name" value="Kelch_2"/>
</dbReference>
<dbReference type="InterPro" id="IPR007213">
    <property type="entry name" value="Ppm1/Ppm2/Tcmp"/>
</dbReference>
<dbReference type="InterPro" id="IPR029063">
    <property type="entry name" value="SAM-dependent_MTases_sf"/>
</dbReference>
<dbReference type="PANTHER" id="PTHR46529">
    <property type="entry name" value="TRNA WYBUTOSINE-SYNTHESIZING PROTEIN 4"/>
    <property type="match status" value="1"/>
</dbReference>
<dbReference type="PANTHER" id="PTHR46529:SF1">
    <property type="entry name" value="TRNA WYBUTOSINE-SYNTHESIZING PROTEIN 4"/>
    <property type="match status" value="1"/>
</dbReference>
<dbReference type="Pfam" id="PF13621">
    <property type="entry name" value="Cupin_8"/>
    <property type="match status" value="1"/>
</dbReference>
<dbReference type="Pfam" id="PF07646">
    <property type="entry name" value="Kelch_2"/>
    <property type="match status" value="1"/>
</dbReference>
<dbReference type="Pfam" id="PF04072">
    <property type="entry name" value="LCM"/>
    <property type="match status" value="1"/>
</dbReference>
<dbReference type="SUPFAM" id="SSF51197">
    <property type="entry name" value="Clavaminate synthase-like"/>
    <property type="match status" value="1"/>
</dbReference>
<dbReference type="SUPFAM" id="SSF50965">
    <property type="entry name" value="Galactose oxidase, central domain"/>
    <property type="match status" value="1"/>
</dbReference>
<dbReference type="SUPFAM" id="SSF53335">
    <property type="entry name" value="S-adenosyl-L-methionine-dependent methyltransferases"/>
    <property type="match status" value="1"/>
</dbReference>
<dbReference type="PROSITE" id="PS51184">
    <property type="entry name" value="JMJC"/>
    <property type="match status" value="1"/>
</dbReference>
<proteinExistence type="inferred from homology"/>
<name>TYW4_NEUCR</name>
<comment type="function">
    <text evidence="1">Probable S-adenosyl-L-methionine-dependent methyltransferase that acts as a component of the wybutosine biosynthesis pathway. Wybutosine is a hyper modified guanosine with a tricyclic base found at the 3'-position adjacent to the anticodon of eukaryotic phenylalanine tRNA. May methylate the carboxyl group of leucine residues to form alpha-leucine ester residues (By similarity).</text>
</comment>
<comment type="catalytic activity">
    <reaction>
        <text>7-[(3S)-3-amino-3-carboxypropyl]wyosine(37) in tRNA(Phe) + S-adenosyl-L-methionine = 7-[(3S)-(3-amino-3-methoxycarbonyl)propyl]wyosine(37) in tRNA(Phe) + S-adenosyl-L-homocysteine</text>
        <dbReference type="Rhea" id="RHEA:36903"/>
        <dbReference type="Rhea" id="RHEA-COMP:10379"/>
        <dbReference type="Rhea" id="RHEA-COMP:11844"/>
        <dbReference type="ChEBI" id="CHEBI:57856"/>
        <dbReference type="ChEBI" id="CHEBI:59789"/>
        <dbReference type="ChEBI" id="CHEBI:73543"/>
        <dbReference type="ChEBI" id="CHEBI:74275"/>
        <dbReference type="EC" id="2.1.1.290"/>
    </reaction>
</comment>
<comment type="catalytic activity">
    <reaction>
        <text>7-[(3S)-(3-amino-3-methoxycarbonyl)propyl]wyosine(37) in tRNA(Phe) + S-adenosyl-L-methionine + CO2 = wybutosine(37) in tRNA(Phe) + S-adenosyl-L-homocysteine + 2 H(+)</text>
        <dbReference type="Rhea" id="RHEA:37119"/>
        <dbReference type="Rhea" id="RHEA-COMP:11844"/>
        <dbReference type="Rhea" id="RHEA-COMP:11847"/>
        <dbReference type="ChEBI" id="CHEBI:15378"/>
        <dbReference type="ChEBI" id="CHEBI:16526"/>
        <dbReference type="ChEBI" id="CHEBI:57856"/>
        <dbReference type="ChEBI" id="CHEBI:59789"/>
        <dbReference type="ChEBI" id="CHEBI:73544"/>
        <dbReference type="ChEBI" id="CHEBI:74275"/>
        <dbReference type="EC" id="2.3.1.231"/>
    </reaction>
</comment>
<comment type="pathway">
    <text>tRNA modification; wybutosine-tRNA(Phe) biosynthesis.</text>
</comment>
<comment type="similarity">
    <text evidence="4">Belongs to the methyltransferase superfamily. LCMT family.</text>
</comment>
<organism>
    <name type="scientific">Neurospora crassa (strain ATCC 24698 / 74-OR23-1A / CBS 708.71 / DSM 1257 / FGSC 987)</name>
    <dbReference type="NCBI Taxonomy" id="367110"/>
    <lineage>
        <taxon>Eukaryota</taxon>
        <taxon>Fungi</taxon>
        <taxon>Dikarya</taxon>
        <taxon>Ascomycota</taxon>
        <taxon>Pezizomycotina</taxon>
        <taxon>Sordariomycetes</taxon>
        <taxon>Sordariomycetidae</taxon>
        <taxon>Sordariales</taxon>
        <taxon>Sordariaceae</taxon>
        <taxon>Neurospora</taxon>
    </lineage>
</organism>
<reference key="1">
    <citation type="journal article" date="2003" name="Nucleic Acids Res.">
        <title>What's in the genome of a filamentous fungus? Analysis of the Neurospora genome sequence.</title>
        <authorList>
            <person name="Mannhaupt G."/>
            <person name="Montrone C."/>
            <person name="Haase D."/>
            <person name="Mewes H.-W."/>
            <person name="Aign V."/>
            <person name="Hoheisel J.D."/>
            <person name="Fartmann B."/>
            <person name="Nyakatura G."/>
            <person name="Kempken F."/>
            <person name="Maier J."/>
            <person name="Schulte U."/>
        </authorList>
    </citation>
    <scope>NUCLEOTIDE SEQUENCE [LARGE SCALE GENOMIC DNA]</scope>
    <source>
        <strain>ATCC 24698 / 74-OR23-1A / CBS 708.71 / DSM 1257 / FGSC 987</strain>
    </source>
</reference>
<reference key="2">
    <citation type="journal article" date="2003" name="Nature">
        <title>The genome sequence of the filamentous fungus Neurospora crassa.</title>
        <authorList>
            <person name="Galagan J.E."/>
            <person name="Calvo S.E."/>
            <person name="Borkovich K.A."/>
            <person name="Selker E.U."/>
            <person name="Read N.D."/>
            <person name="Jaffe D.B."/>
            <person name="FitzHugh W."/>
            <person name="Ma L.-J."/>
            <person name="Smirnov S."/>
            <person name="Purcell S."/>
            <person name="Rehman B."/>
            <person name="Elkins T."/>
            <person name="Engels R."/>
            <person name="Wang S."/>
            <person name="Nielsen C.B."/>
            <person name="Butler J."/>
            <person name="Endrizzi M."/>
            <person name="Qui D."/>
            <person name="Ianakiev P."/>
            <person name="Bell-Pedersen D."/>
            <person name="Nelson M.A."/>
            <person name="Werner-Washburne M."/>
            <person name="Selitrennikoff C.P."/>
            <person name="Kinsey J.A."/>
            <person name="Braun E.L."/>
            <person name="Zelter A."/>
            <person name="Schulte U."/>
            <person name="Kothe G.O."/>
            <person name="Jedd G."/>
            <person name="Mewes H.-W."/>
            <person name="Staben C."/>
            <person name="Marcotte E."/>
            <person name="Greenberg D."/>
            <person name="Roy A."/>
            <person name="Foley K."/>
            <person name="Naylor J."/>
            <person name="Stange-Thomann N."/>
            <person name="Barrett R."/>
            <person name="Gnerre S."/>
            <person name="Kamal M."/>
            <person name="Kamvysselis M."/>
            <person name="Mauceli E.W."/>
            <person name="Bielke C."/>
            <person name="Rudd S."/>
            <person name="Frishman D."/>
            <person name="Krystofova S."/>
            <person name="Rasmussen C."/>
            <person name="Metzenberg R.L."/>
            <person name="Perkins D.D."/>
            <person name="Kroken S."/>
            <person name="Cogoni C."/>
            <person name="Macino G."/>
            <person name="Catcheside D.E.A."/>
            <person name="Li W."/>
            <person name="Pratt R.J."/>
            <person name="Osmani S.A."/>
            <person name="DeSouza C.P.C."/>
            <person name="Glass N.L."/>
            <person name="Orbach M.J."/>
            <person name="Berglund J.A."/>
            <person name="Voelker R."/>
            <person name="Yarden O."/>
            <person name="Plamann M."/>
            <person name="Seiler S."/>
            <person name="Dunlap J.C."/>
            <person name="Radford A."/>
            <person name="Aramayo R."/>
            <person name="Natvig D.O."/>
            <person name="Alex L.A."/>
            <person name="Mannhaupt G."/>
            <person name="Ebbole D.J."/>
            <person name="Freitag M."/>
            <person name="Paulsen I."/>
            <person name="Sachs M.S."/>
            <person name="Lander E.S."/>
            <person name="Nusbaum C."/>
            <person name="Birren B.W."/>
        </authorList>
    </citation>
    <scope>NUCLEOTIDE SEQUENCE [LARGE SCALE GENOMIC DNA]</scope>
    <source>
        <strain>ATCC 24698 / 74-OR23-1A / CBS 708.71 / DSM 1257 / FGSC 987</strain>
    </source>
</reference>